<accession>Q9CPM2</accession>
<name>Y015_PASMU</name>
<sequence length="207" mass="23514">MRFNVSFLLSLLLPTLAFAESWSIRISEDEVSRTYGYHDTVESEHTMPLLESSPKSEKNTKVTYVNRDFTRQLNPSADEQDAKALGSSIEFEVFQINETKSSHTIFESGAGICQGFHSRLGVEVTDATTYYVIPVNKEEYYTNIATATVLSNEDSKNMQYVPVFYIQNPELAKKVQDEENKKGKNLASKNIENRKTILSHVICRKVI</sequence>
<protein>
    <recommendedName>
        <fullName>Uncharacterized protein PM0015</fullName>
    </recommendedName>
</protein>
<proteinExistence type="inferred from homology"/>
<keyword id="KW-1185">Reference proteome</keyword>
<keyword id="KW-0732">Signal</keyword>
<gene>
    <name type="ordered locus">PM0015</name>
</gene>
<comment type="similarity">
    <text evidence="2">To P.multocida PM1509.</text>
</comment>
<evidence type="ECO:0000255" key="1"/>
<evidence type="ECO:0000305" key="2"/>
<dbReference type="EMBL" id="AE004439">
    <property type="protein sequence ID" value="AAK02099.1"/>
    <property type="molecule type" value="Genomic_DNA"/>
</dbReference>
<dbReference type="RefSeq" id="WP_005722258.1">
    <property type="nucleotide sequence ID" value="NC_002663.1"/>
</dbReference>
<dbReference type="SMR" id="Q9CPM2"/>
<dbReference type="STRING" id="272843.PM0015"/>
<dbReference type="EnsemblBacteria" id="AAK02099">
    <property type="protein sequence ID" value="AAK02099"/>
    <property type="gene ID" value="PM0015"/>
</dbReference>
<dbReference type="KEGG" id="pmu:PM0015"/>
<dbReference type="HOGENOM" id="CLU_116248_0_0_6"/>
<dbReference type="OrthoDB" id="5689769at2"/>
<dbReference type="Proteomes" id="UP000000809">
    <property type="component" value="Chromosome"/>
</dbReference>
<feature type="signal peptide" evidence="1">
    <location>
        <begin position="1"/>
        <end position="19"/>
    </location>
</feature>
<feature type="chain" id="PRO_0000014172" description="Uncharacterized protein PM0015">
    <location>
        <begin position="20"/>
        <end position="207"/>
    </location>
</feature>
<reference key="1">
    <citation type="journal article" date="2001" name="Proc. Natl. Acad. Sci. U.S.A.">
        <title>Complete genomic sequence of Pasteurella multocida Pm70.</title>
        <authorList>
            <person name="May B.J."/>
            <person name="Zhang Q."/>
            <person name="Li L.L."/>
            <person name="Paustian M.L."/>
            <person name="Whittam T.S."/>
            <person name="Kapur V."/>
        </authorList>
    </citation>
    <scope>NUCLEOTIDE SEQUENCE [LARGE SCALE GENOMIC DNA]</scope>
    <source>
        <strain>Pm70</strain>
    </source>
</reference>
<organism>
    <name type="scientific">Pasteurella multocida (strain Pm70)</name>
    <dbReference type="NCBI Taxonomy" id="272843"/>
    <lineage>
        <taxon>Bacteria</taxon>
        <taxon>Pseudomonadati</taxon>
        <taxon>Pseudomonadota</taxon>
        <taxon>Gammaproteobacteria</taxon>
        <taxon>Pasteurellales</taxon>
        <taxon>Pasteurellaceae</taxon>
        <taxon>Pasteurella</taxon>
    </lineage>
</organism>